<organism>
    <name type="scientific">Chloroherpeton thalassium (strain ATCC 35110 / GB-78)</name>
    <dbReference type="NCBI Taxonomy" id="517418"/>
    <lineage>
        <taxon>Bacteria</taxon>
        <taxon>Pseudomonadati</taxon>
        <taxon>Chlorobiota</taxon>
        <taxon>Chlorobiia</taxon>
        <taxon>Chlorobiales</taxon>
        <taxon>Chloroherpetonaceae</taxon>
        <taxon>Chloroherpeton</taxon>
    </lineage>
</organism>
<accession>B3QWU0</accession>
<evidence type="ECO:0000255" key="1">
    <source>
        <dbReference type="HAMAP-Rule" id="MF_00037"/>
    </source>
</evidence>
<sequence length="311" mass="34104">MISIADLREVFRGDVKISASLAEHSAFKIGGKADIVLKPLDKADAINVIKFFHEKQKPHIVLGRGSNVLISDDGVREAVILLSGCLEKVDINGELVYAEAGVDLQKLAVQSLNHRLGGLEAFSGVPGSVGGAIVMNAGAHGHEIFELIDWVEVVRDGSLKKLRKNEIKARYRETDLAQDTVLSARLKLKPISEKEQAECFERRRELMEKRRNSQPLSLPNVGSIFKNPPPYNGESRQFAGQLIEACGLKGVREGGAMISDKHANFIVNLGNATASDVLALIELAKTKVRLRFGIDLELEIKLIGFTEHVEK</sequence>
<feature type="chain" id="PRO_1000191412" description="UDP-N-acetylenolpyruvoylglucosamine reductase">
    <location>
        <begin position="1"/>
        <end position="311"/>
    </location>
</feature>
<feature type="domain" description="FAD-binding PCMH-type" evidence="1">
    <location>
        <begin position="29"/>
        <end position="191"/>
    </location>
</feature>
<feature type="active site" evidence="1">
    <location>
        <position position="172"/>
    </location>
</feature>
<feature type="active site" description="Proton donor" evidence="1">
    <location>
        <position position="223"/>
    </location>
</feature>
<feature type="active site" evidence="1">
    <location>
        <position position="299"/>
    </location>
</feature>
<keyword id="KW-0131">Cell cycle</keyword>
<keyword id="KW-0132">Cell division</keyword>
<keyword id="KW-0133">Cell shape</keyword>
<keyword id="KW-0961">Cell wall biogenesis/degradation</keyword>
<keyword id="KW-0963">Cytoplasm</keyword>
<keyword id="KW-0274">FAD</keyword>
<keyword id="KW-0285">Flavoprotein</keyword>
<keyword id="KW-0521">NADP</keyword>
<keyword id="KW-0560">Oxidoreductase</keyword>
<keyword id="KW-0573">Peptidoglycan synthesis</keyword>
<keyword id="KW-1185">Reference proteome</keyword>
<proteinExistence type="inferred from homology"/>
<comment type="function">
    <text evidence="1">Cell wall formation.</text>
</comment>
<comment type="catalytic activity">
    <reaction evidence="1">
        <text>UDP-N-acetyl-alpha-D-muramate + NADP(+) = UDP-N-acetyl-3-O-(1-carboxyvinyl)-alpha-D-glucosamine + NADPH + H(+)</text>
        <dbReference type="Rhea" id="RHEA:12248"/>
        <dbReference type="ChEBI" id="CHEBI:15378"/>
        <dbReference type="ChEBI" id="CHEBI:57783"/>
        <dbReference type="ChEBI" id="CHEBI:58349"/>
        <dbReference type="ChEBI" id="CHEBI:68483"/>
        <dbReference type="ChEBI" id="CHEBI:70757"/>
        <dbReference type="EC" id="1.3.1.98"/>
    </reaction>
</comment>
<comment type="cofactor">
    <cofactor evidence="1">
        <name>FAD</name>
        <dbReference type="ChEBI" id="CHEBI:57692"/>
    </cofactor>
</comment>
<comment type="pathway">
    <text evidence="1">Cell wall biogenesis; peptidoglycan biosynthesis.</text>
</comment>
<comment type="subcellular location">
    <subcellularLocation>
        <location evidence="1">Cytoplasm</location>
    </subcellularLocation>
</comment>
<comment type="similarity">
    <text evidence="1">Belongs to the MurB family.</text>
</comment>
<gene>
    <name evidence="1" type="primary">murB</name>
    <name type="ordered locus">Ctha_0836</name>
</gene>
<name>MURB_CHLT3</name>
<reference key="1">
    <citation type="submission" date="2008-06" db="EMBL/GenBank/DDBJ databases">
        <title>Complete sequence of Chloroherpeton thalassium ATCC 35110.</title>
        <authorList>
            <consortium name="US DOE Joint Genome Institute"/>
            <person name="Lucas S."/>
            <person name="Copeland A."/>
            <person name="Lapidus A."/>
            <person name="Glavina del Rio T."/>
            <person name="Dalin E."/>
            <person name="Tice H."/>
            <person name="Bruce D."/>
            <person name="Goodwin L."/>
            <person name="Pitluck S."/>
            <person name="Schmutz J."/>
            <person name="Larimer F."/>
            <person name="Land M."/>
            <person name="Hauser L."/>
            <person name="Kyrpides N."/>
            <person name="Mikhailova N."/>
            <person name="Liu Z."/>
            <person name="Li T."/>
            <person name="Zhao F."/>
            <person name="Overmann J."/>
            <person name="Bryant D.A."/>
            <person name="Richardson P."/>
        </authorList>
    </citation>
    <scope>NUCLEOTIDE SEQUENCE [LARGE SCALE GENOMIC DNA]</scope>
    <source>
        <strain>ATCC 35110 / GB-78</strain>
    </source>
</reference>
<dbReference type="EC" id="1.3.1.98" evidence="1"/>
<dbReference type="EMBL" id="CP001100">
    <property type="protein sequence ID" value="ACF13304.1"/>
    <property type="molecule type" value="Genomic_DNA"/>
</dbReference>
<dbReference type="RefSeq" id="WP_012499388.1">
    <property type="nucleotide sequence ID" value="NC_011026.1"/>
</dbReference>
<dbReference type="SMR" id="B3QWU0"/>
<dbReference type="STRING" id="517418.Ctha_0836"/>
<dbReference type="KEGG" id="cts:Ctha_0836"/>
<dbReference type="eggNOG" id="COG0812">
    <property type="taxonomic scope" value="Bacteria"/>
</dbReference>
<dbReference type="HOGENOM" id="CLU_035304_1_1_10"/>
<dbReference type="OrthoDB" id="9804753at2"/>
<dbReference type="UniPathway" id="UPA00219"/>
<dbReference type="Proteomes" id="UP000001208">
    <property type="component" value="Chromosome"/>
</dbReference>
<dbReference type="GO" id="GO:0005829">
    <property type="term" value="C:cytosol"/>
    <property type="evidence" value="ECO:0007669"/>
    <property type="project" value="TreeGrafter"/>
</dbReference>
<dbReference type="GO" id="GO:0071949">
    <property type="term" value="F:FAD binding"/>
    <property type="evidence" value="ECO:0007669"/>
    <property type="project" value="InterPro"/>
</dbReference>
<dbReference type="GO" id="GO:0008762">
    <property type="term" value="F:UDP-N-acetylmuramate dehydrogenase activity"/>
    <property type="evidence" value="ECO:0007669"/>
    <property type="project" value="UniProtKB-UniRule"/>
</dbReference>
<dbReference type="GO" id="GO:0051301">
    <property type="term" value="P:cell division"/>
    <property type="evidence" value="ECO:0007669"/>
    <property type="project" value="UniProtKB-KW"/>
</dbReference>
<dbReference type="GO" id="GO:0071555">
    <property type="term" value="P:cell wall organization"/>
    <property type="evidence" value="ECO:0007669"/>
    <property type="project" value="UniProtKB-KW"/>
</dbReference>
<dbReference type="GO" id="GO:0009252">
    <property type="term" value="P:peptidoglycan biosynthetic process"/>
    <property type="evidence" value="ECO:0007669"/>
    <property type="project" value="UniProtKB-UniRule"/>
</dbReference>
<dbReference type="GO" id="GO:0008360">
    <property type="term" value="P:regulation of cell shape"/>
    <property type="evidence" value="ECO:0007669"/>
    <property type="project" value="UniProtKB-KW"/>
</dbReference>
<dbReference type="Gene3D" id="3.30.465.10">
    <property type="match status" value="1"/>
</dbReference>
<dbReference type="Gene3D" id="3.90.78.10">
    <property type="entry name" value="UDP-N-acetylenolpyruvoylglucosamine reductase, C-terminal domain"/>
    <property type="match status" value="1"/>
</dbReference>
<dbReference type="Gene3D" id="3.30.43.10">
    <property type="entry name" value="Uridine Diphospho-n-acetylenolpyruvylglucosamine Reductase, domain 2"/>
    <property type="match status" value="1"/>
</dbReference>
<dbReference type="HAMAP" id="MF_00037">
    <property type="entry name" value="MurB"/>
    <property type="match status" value="1"/>
</dbReference>
<dbReference type="InterPro" id="IPR016166">
    <property type="entry name" value="FAD-bd_PCMH"/>
</dbReference>
<dbReference type="InterPro" id="IPR036318">
    <property type="entry name" value="FAD-bd_PCMH-like_sf"/>
</dbReference>
<dbReference type="InterPro" id="IPR016167">
    <property type="entry name" value="FAD-bd_PCMH_sub1"/>
</dbReference>
<dbReference type="InterPro" id="IPR016169">
    <property type="entry name" value="FAD-bd_PCMH_sub2"/>
</dbReference>
<dbReference type="InterPro" id="IPR003170">
    <property type="entry name" value="MurB"/>
</dbReference>
<dbReference type="InterPro" id="IPR011601">
    <property type="entry name" value="MurB_C"/>
</dbReference>
<dbReference type="InterPro" id="IPR036635">
    <property type="entry name" value="MurB_C_sf"/>
</dbReference>
<dbReference type="InterPro" id="IPR006094">
    <property type="entry name" value="Oxid_FAD_bind_N"/>
</dbReference>
<dbReference type="NCBIfam" id="TIGR00179">
    <property type="entry name" value="murB"/>
    <property type="match status" value="1"/>
</dbReference>
<dbReference type="NCBIfam" id="NF010480">
    <property type="entry name" value="PRK13905.1"/>
    <property type="match status" value="1"/>
</dbReference>
<dbReference type="PANTHER" id="PTHR21071">
    <property type="entry name" value="UDP-N-ACETYLENOLPYRUVOYLGLUCOSAMINE REDUCTASE"/>
    <property type="match status" value="1"/>
</dbReference>
<dbReference type="PANTHER" id="PTHR21071:SF4">
    <property type="entry name" value="UDP-N-ACETYLENOLPYRUVOYLGLUCOSAMINE REDUCTASE"/>
    <property type="match status" value="1"/>
</dbReference>
<dbReference type="Pfam" id="PF01565">
    <property type="entry name" value="FAD_binding_4"/>
    <property type="match status" value="1"/>
</dbReference>
<dbReference type="Pfam" id="PF02873">
    <property type="entry name" value="MurB_C"/>
    <property type="match status" value="1"/>
</dbReference>
<dbReference type="SUPFAM" id="SSF56176">
    <property type="entry name" value="FAD-binding/transporter-associated domain-like"/>
    <property type="match status" value="1"/>
</dbReference>
<dbReference type="SUPFAM" id="SSF56194">
    <property type="entry name" value="Uridine diphospho-N-Acetylenolpyruvylglucosamine reductase, MurB, C-terminal domain"/>
    <property type="match status" value="1"/>
</dbReference>
<dbReference type="PROSITE" id="PS51387">
    <property type="entry name" value="FAD_PCMH"/>
    <property type="match status" value="1"/>
</dbReference>
<protein>
    <recommendedName>
        <fullName evidence="1">UDP-N-acetylenolpyruvoylglucosamine reductase</fullName>
        <ecNumber evidence="1">1.3.1.98</ecNumber>
    </recommendedName>
    <alternativeName>
        <fullName evidence="1">UDP-N-acetylmuramate dehydrogenase</fullName>
    </alternativeName>
</protein>